<proteinExistence type="inferred from homology"/>
<sequence length="223" mass="25195">MELTLHEARVIGCLLEKEITTPEQYPLSLNSLTLACNQKTSREPVLELSETQVQIAVDSLNRKRLISEQSGFGSRVVKYKHRFCNTEFSELQLSPAALAIVCLLLLRGPQTPGELRTRSNRLHEFKDVIEVEDCIRQLMNREKPFLKQLPREAGRRESRYVELFSASSSQLETAQPESASHTVAHVAVSLDAEPLELTKRVTELEQQVAELTQKLDELIASLS</sequence>
<feature type="chain" id="PRO_1000185667" description="UPF0502 protein Sbal223_2520">
    <location>
        <begin position="1"/>
        <end position="223"/>
    </location>
</feature>
<comment type="similarity">
    <text evidence="1">Belongs to the UPF0502 family.</text>
</comment>
<protein>
    <recommendedName>
        <fullName evidence="1">UPF0502 protein Sbal223_2520</fullName>
    </recommendedName>
</protein>
<name>Y2520_SHEB2</name>
<gene>
    <name type="ordered locus">Sbal223_2520</name>
</gene>
<organism>
    <name type="scientific">Shewanella baltica (strain OS223)</name>
    <dbReference type="NCBI Taxonomy" id="407976"/>
    <lineage>
        <taxon>Bacteria</taxon>
        <taxon>Pseudomonadati</taxon>
        <taxon>Pseudomonadota</taxon>
        <taxon>Gammaproteobacteria</taxon>
        <taxon>Alteromonadales</taxon>
        <taxon>Shewanellaceae</taxon>
        <taxon>Shewanella</taxon>
    </lineage>
</organism>
<accession>B8EAI5</accession>
<evidence type="ECO:0000255" key="1">
    <source>
        <dbReference type="HAMAP-Rule" id="MF_01584"/>
    </source>
</evidence>
<dbReference type="EMBL" id="CP001252">
    <property type="protein sequence ID" value="ACK47014.1"/>
    <property type="molecule type" value="Genomic_DNA"/>
</dbReference>
<dbReference type="RefSeq" id="WP_012587873.1">
    <property type="nucleotide sequence ID" value="NC_011663.1"/>
</dbReference>
<dbReference type="SMR" id="B8EAI5"/>
<dbReference type="KEGG" id="sbp:Sbal223_2520"/>
<dbReference type="HOGENOM" id="CLU_057831_2_0_6"/>
<dbReference type="Proteomes" id="UP000002507">
    <property type="component" value="Chromosome"/>
</dbReference>
<dbReference type="Gene3D" id="1.10.10.10">
    <property type="entry name" value="Winged helix-like DNA-binding domain superfamily/Winged helix DNA-binding domain"/>
    <property type="match status" value="2"/>
</dbReference>
<dbReference type="HAMAP" id="MF_01584">
    <property type="entry name" value="UPF0502"/>
    <property type="match status" value="1"/>
</dbReference>
<dbReference type="InterPro" id="IPR007432">
    <property type="entry name" value="DUF480"/>
</dbReference>
<dbReference type="InterPro" id="IPR036388">
    <property type="entry name" value="WH-like_DNA-bd_sf"/>
</dbReference>
<dbReference type="InterPro" id="IPR036390">
    <property type="entry name" value="WH_DNA-bd_sf"/>
</dbReference>
<dbReference type="PANTHER" id="PTHR38768">
    <property type="entry name" value="UPF0502 PROTEIN YCEH"/>
    <property type="match status" value="1"/>
</dbReference>
<dbReference type="PANTHER" id="PTHR38768:SF1">
    <property type="entry name" value="UPF0502 PROTEIN YCEH"/>
    <property type="match status" value="1"/>
</dbReference>
<dbReference type="Pfam" id="PF04337">
    <property type="entry name" value="DUF480"/>
    <property type="match status" value="1"/>
</dbReference>
<dbReference type="SUPFAM" id="SSF46785">
    <property type="entry name" value="Winged helix' DNA-binding domain"/>
    <property type="match status" value="2"/>
</dbReference>
<reference key="1">
    <citation type="submission" date="2008-12" db="EMBL/GenBank/DDBJ databases">
        <title>Complete sequence of chromosome of Shewanella baltica OS223.</title>
        <authorList>
            <consortium name="US DOE Joint Genome Institute"/>
            <person name="Lucas S."/>
            <person name="Copeland A."/>
            <person name="Lapidus A."/>
            <person name="Glavina del Rio T."/>
            <person name="Dalin E."/>
            <person name="Tice H."/>
            <person name="Bruce D."/>
            <person name="Goodwin L."/>
            <person name="Pitluck S."/>
            <person name="Chertkov O."/>
            <person name="Meincke L."/>
            <person name="Brettin T."/>
            <person name="Detter J.C."/>
            <person name="Han C."/>
            <person name="Kuske C.R."/>
            <person name="Larimer F."/>
            <person name="Land M."/>
            <person name="Hauser L."/>
            <person name="Kyrpides N."/>
            <person name="Ovchinnikova G."/>
            <person name="Brettar I."/>
            <person name="Rodrigues J."/>
            <person name="Konstantinidis K."/>
            <person name="Tiedje J."/>
        </authorList>
    </citation>
    <scope>NUCLEOTIDE SEQUENCE [LARGE SCALE GENOMIC DNA]</scope>
    <source>
        <strain>OS223</strain>
    </source>
</reference>